<comment type="catalytic activity">
    <reaction evidence="1">
        <text>2-(N(omega)-L-arginino)succinate = fumarate + L-arginine</text>
        <dbReference type="Rhea" id="RHEA:24020"/>
        <dbReference type="ChEBI" id="CHEBI:29806"/>
        <dbReference type="ChEBI" id="CHEBI:32682"/>
        <dbReference type="ChEBI" id="CHEBI:57472"/>
        <dbReference type="EC" id="4.3.2.1"/>
    </reaction>
</comment>
<comment type="pathway">
    <text evidence="1">Amino-acid biosynthesis; L-arginine biosynthesis; L-arginine from L-ornithine and carbamoyl phosphate: step 3/3.</text>
</comment>
<comment type="subcellular location">
    <subcellularLocation>
        <location evidence="1">Cytoplasm</location>
    </subcellularLocation>
</comment>
<comment type="similarity">
    <text evidence="1">Belongs to the lyase 1 family. Argininosuccinate lyase subfamily.</text>
</comment>
<accession>Q8FYA4</accession>
<accession>G0K8K1</accession>
<name>ARLY_BRUSU</name>
<evidence type="ECO:0000255" key="1">
    <source>
        <dbReference type="HAMAP-Rule" id="MF_00006"/>
    </source>
</evidence>
<dbReference type="EC" id="4.3.2.1" evidence="1"/>
<dbReference type="EMBL" id="AE014291">
    <property type="protein sequence ID" value="AAN30871.1"/>
    <property type="molecule type" value="Genomic_DNA"/>
</dbReference>
<dbReference type="EMBL" id="CP002997">
    <property type="protein sequence ID" value="AEM19288.1"/>
    <property type="molecule type" value="Genomic_DNA"/>
</dbReference>
<dbReference type="RefSeq" id="WP_004687711.1">
    <property type="nucleotide sequence ID" value="NZ_KN046804.1"/>
</dbReference>
<dbReference type="SMR" id="Q8FYA4"/>
<dbReference type="GeneID" id="97534742"/>
<dbReference type="KEGG" id="bms:BR1981"/>
<dbReference type="KEGG" id="bsi:BS1330_I1975"/>
<dbReference type="PATRIC" id="fig|204722.22.peg.2031"/>
<dbReference type="HOGENOM" id="CLU_027272_2_3_5"/>
<dbReference type="PhylomeDB" id="Q8FYA4"/>
<dbReference type="UniPathway" id="UPA00068">
    <property type="reaction ID" value="UER00114"/>
</dbReference>
<dbReference type="Proteomes" id="UP000007104">
    <property type="component" value="Chromosome I"/>
</dbReference>
<dbReference type="GO" id="GO:0005829">
    <property type="term" value="C:cytosol"/>
    <property type="evidence" value="ECO:0007669"/>
    <property type="project" value="TreeGrafter"/>
</dbReference>
<dbReference type="GO" id="GO:0004056">
    <property type="term" value="F:argininosuccinate lyase activity"/>
    <property type="evidence" value="ECO:0007669"/>
    <property type="project" value="UniProtKB-UniRule"/>
</dbReference>
<dbReference type="GO" id="GO:0042450">
    <property type="term" value="P:arginine biosynthetic process via ornithine"/>
    <property type="evidence" value="ECO:0007669"/>
    <property type="project" value="InterPro"/>
</dbReference>
<dbReference type="GO" id="GO:0006526">
    <property type="term" value="P:L-arginine biosynthetic process"/>
    <property type="evidence" value="ECO:0007669"/>
    <property type="project" value="UniProtKB-UniRule"/>
</dbReference>
<dbReference type="CDD" id="cd01359">
    <property type="entry name" value="Argininosuccinate_lyase"/>
    <property type="match status" value="1"/>
</dbReference>
<dbReference type="FunFam" id="1.10.275.10:FF:000002">
    <property type="entry name" value="Argininosuccinate lyase"/>
    <property type="match status" value="1"/>
</dbReference>
<dbReference type="FunFam" id="1.10.40.30:FF:000001">
    <property type="entry name" value="Argininosuccinate lyase"/>
    <property type="match status" value="1"/>
</dbReference>
<dbReference type="FunFam" id="1.20.200.10:FF:000015">
    <property type="entry name" value="argininosuccinate lyase isoform X2"/>
    <property type="match status" value="1"/>
</dbReference>
<dbReference type="Gene3D" id="1.10.40.30">
    <property type="entry name" value="Fumarase/aspartase (C-terminal domain)"/>
    <property type="match status" value="1"/>
</dbReference>
<dbReference type="Gene3D" id="1.20.200.10">
    <property type="entry name" value="Fumarase/aspartase (Central domain)"/>
    <property type="match status" value="1"/>
</dbReference>
<dbReference type="Gene3D" id="1.10.275.10">
    <property type="entry name" value="Fumarase/aspartase (N-terminal domain)"/>
    <property type="match status" value="1"/>
</dbReference>
<dbReference type="HAMAP" id="MF_00006">
    <property type="entry name" value="Arg_succ_lyase"/>
    <property type="match status" value="1"/>
</dbReference>
<dbReference type="InterPro" id="IPR029419">
    <property type="entry name" value="Arg_succ_lyase_C"/>
</dbReference>
<dbReference type="InterPro" id="IPR009049">
    <property type="entry name" value="Argininosuccinate_lyase"/>
</dbReference>
<dbReference type="InterPro" id="IPR024083">
    <property type="entry name" value="Fumarase/histidase_N"/>
</dbReference>
<dbReference type="InterPro" id="IPR020557">
    <property type="entry name" value="Fumarate_lyase_CS"/>
</dbReference>
<dbReference type="InterPro" id="IPR000362">
    <property type="entry name" value="Fumarate_lyase_fam"/>
</dbReference>
<dbReference type="InterPro" id="IPR022761">
    <property type="entry name" value="Fumarate_lyase_N"/>
</dbReference>
<dbReference type="InterPro" id="IPR008948">
    <property type="entry name" value="L-Aspartase-like"/>
</dbReference>
<dbReference type="NCBIfam" id="TIGR00838">
    <property type="entry name" value="argH"/>
    <property type="match status" value="1"/>
</dbReference>
<dbReference type="PANTHER" id="PTHR43814">
    <property type="entry name" value="ARGININOSUCCINATE LYASE"/>
    <property type="match status" value="1"/>
</dbReference>
<dbReference type="PANTHER" id="PTHR43814:SF1">
    <property type="entry name" value="ARGININOSUCCINATE LYASE"/>
    <property type="match status" value="1"/>
</dbReference>
<dbReference type="Pfam" id="PF14698">
    <property type="entry name" value="ASL_C2"/>
    <property type="match status" value="1"/>
</dbReference>
<dbReference type="Pfam" id="PF00206">
    <property type="entry name" value="Lyase_1"/>
    <property type="match status" value="1"/>
</dbReference>
<dbReference type="PRINTS" id="PR00145">
    <property type="entry name" value="ARGSUCLYASE"/>
</dbReference>
<dbReference type="PRINTS" id="PR00149">
    <property type="entry name" value="FUMRATELYASE"/>
</dbReference>
<dbReference type="SUPFAM" id="SSF48557">
    <property type="entry name" value="L-aspartase-like"/>
    <property type="match status" value="1"/>
</dbReference>
<dbReference type="PROSITE" id="PS00163">
    <property type="entry name" value="FUMARATE_LYASES"/>
    <property type="match status" value="1"/>
</dbReference>
<protein>
    <recommendedName>
        <fullName evidence="1">Argininosuccinate lyase</fullName>
        <shortName evidence="1">ASAL</shortName>
        <ecNumber evidence="1">4.3.2.1</ecNumber>
    </recommendedName>
    <alternativeName>
        <fullName evidence="1">Arginosuccinase</fullName>
    </alternativeName>
</protein>
<sequence>MSEQKSSNQMWGGRFASGPDAIMEEINASIGFDRKLYAQDIQGSLAHAAMLAKTGIIAAEDHKQIENGLKTIRKEIEEGKFTFSRKLEDIHMNIEARLAELIGPAAGRLHTARSRNDQVAVDFRLWVKQELEKTAAALKNLIEAFLERAEEHAATVMPGFTHLQTAQPVTFGHHCMAYVEMFGRDLSRVRDAIERMDESPLGAAALAGTGFPIDRHMTAKALGFREPTRNSLDSVSDRDYALEFLSLAAICAGHLSRLAEEIVIWSTPQFNFVRLSDAFSTGSSIMPQKKNPDAAELVRAKTGRINGSLVALLTIMKGLPLAYSKDMQEDKEQVFDAAENLELAIAAMAGMVRDLTVNVAAMKKAAGSGYSTATDLADWLVRTLGLPFREAHHVTGRAVALAESRKVDLAKLSLEELQSINPAITAEVFGYLTVEKSVKSRQSFGGTAPQEVRRQIRYWKKRIAKA</sequence>
<feature type="chain" id="PRO_0000137747" description="Argininosuccinate lyase">
    <location>
        <begin position="1"/>
        <end position="466"/>
    </location>
</feature>
<proteinExistence type="inferred from homology"/>
<organism>
    <name type="scientific">Brucella suis biovar 1 (strain 1330)</name>
    <dbReference type="NCBI Taxonomy" id="204722"/>
    <lineage>
        <taxon>Bacteria</taxon>
        <taxon>Pseudomonadati</taxon>
        <taxon>Pseudomonadota</taxon>
        <taxon>Alphaproteobacteria</taxon>
        <taxon>Hyphomicrobiales</taxon>
        <taxon>Brucellaceae</taxon>
        <taxon>Brucella/Ochrobactrum group</taxon>
        <taxon>Brucella</taxon>
    </lineage>
</organism>
<reference key="1">
    <citation type="journal article" date="2002" name="Proc. Natl. Acad. Sci. U.S.A.">
        <title>The Brucella suis genome reveals fundamental similarities between animal and plant pathogens and symbionts.</title>
        <authorList>
            <person name="Paulsen I.T."/>
            <person name="Seshadri R."/>
            <person name="Nelson K.E."/>
            <person name="Eisen J.A."/>
            <person name="Heidelberg J.F."/>
            <person name="Read T.D."/>
            <person name="Dodson R.J."/>
            <person name="Umayam L.A."/>
            <person name="Brinkac L.M."/>
            <person name="Beanan M.J."/>
            <person name="Daugherty S.C."/>
            <person name="DeBoy R.T."/>
            <person name="Durkin A.S."/>
            <person name="Kolonay J.F."/>
            <person name="Madupu R."/>
            <person name="Nelson W.C."/>
            <person name="Ayodeji B."/>
            <person name="Kraul M."/>
            <person name="Shetty J."/>
            <person name="Malek J.A."/>
            <person name="Van Aken S.E."/>
            <person name="Riedmuller S."/>
            <person name="Tettelin H."/>
            <person name="Gill S.R."/>
            <person name="White O."/>
            <person name="Salzberg S.L."/>
            <person name="Hoover D.L."/>
            <person name="Lindler L.E."/>
            <person name="Halling S.M."/>
            <person name="Boyle S.M."/>
            <person name="Fraser C.M."/>
        </authorList>
    </citation>
    <scope>NUCLEOTIDE SEQUENCE [LARGE SCALE GENOMIC DNA]</scope>
    <source>
        <strain>1330</strain>
    </source>
</reference>
<reference key="2">
    <citation type="journal article" date="2011" name="J. Bacteriol.">
        <title>Revised genome sequence of Brucella suis 1330.</title>
        <authorList>
            <person name="Tae H."/>
            <person name="Shallom S."/>
            <person name="Settlage R."/>
            <person name="Preston D."/>
            <person name="Adams L.G."/>
            <person name="Garner H.R."/>
        </authorList>
    </citation>
    <scope>NUCLEOTIDE SEQUENCE [LARGE SCALE GENOMIC DNA]</scope>
    <source>
        <strain>1330</strain>
    </source>
</reference>
<keyword id="KW-0028">Amino-acid biosynthesis</keyword>
<keyword id="KW-0055">Arginine biosynthesis</keyword>
<keyword id="KW-0963">Cytoplasm</keyword>
<keyword id="KW-0456">Lyase</keyword>
<gene>
    <name evidence="1" type="primary">argH</name>
    <name type="ordered locus">BR1981</name>
    <name type="ordered locus">BS1330_I1975</name>
</gene>